<comment type="similarity">
    <text evidence="1">Belongs to the UPF0325 family.</text>
</comment>
<proteinExistence type="inferred from homology"/>
<dbReference type="EMBL" id="AP008232">
    <property type="protein sequence ID" value="BAE75222.1"/>
    <property type="molecule type" value="Genomic_DNA"/>
</dbReference>
<dbReference type="RefSeq" id="WP_011411678.1">
    <property type="nucleotide sequence ID" value="NC_007712.1"/>
</dbReference>
<dbReference type="SMR" id="Q2NRK3"/>
<dbReference type="STRING" id="343509.SG1947"/>
<dbReference type="KEGG" id="sgl:SG1947"/>
<dbReference type="eggNOG" id="ENOG502ZBV4">
    <property type="taxonomic scope" value="Bacteria"/>
</dbReference>
<dbReference type="HOGENOM" id="CLU_136774_0_0_6"/>
<dbReference type="OrthoDB" id="5624524at2"/>
<dbReference type="BioCyc" id="SGLO343509:SGP1_RS17860-MONOMER"/>
<dbReference type="Proteomes" id="UP000001932">
    <property type="component" value="Chromosome"/>
</dbReference>
<dbReference type="HAMAP" id="MF_01519">
    <property type="entry name" value="UPF0325"/>
    <property type="match status" value="1"/>
</dbReference>
<dbReference type="InterPro" id="IPR020911">
    <property type="entry name" value="UPF0325"/>
</dbReference>
<dbReference type="NCBIfam" id="NF010213">
    <property type="entry name" value="PRK13677.1"/>
    <property type="match status" value="1"/>
</dbReference>
<dbReference type="Pfam" id="PF11944">
    <property type="entry name" value="DUF3461"/>
    <property type="match status" value="1"/>
</dbReference>
<feature type="chain" id="PRO_0000244256" description="UPF0325 protein SG1947">
    <location>
        <begin position="1"/>
        <end position="129"/>
    </location>
</feature>
<evidence type="ECO:0000255" key="1">
    <source>
        <dbReference type="HAMAP-Rule" id="MF_01519"/>
    </source>
</evidence>
<reference key="1">
    <citation type="journal article" date="2006" name="Genome Res.">
        <title>Massive genome erosion and functional adaptations provide insights into the symbiotic lifestyle of Sodalis glossinidius in the tsetse host.</title>
        <authorList>
            <person name="Toh H."/>
            <person name="Weiss B.L."/>
            <person name="Perkin S.A.H."/>
            <person name="Yamashita A."/>
            <person name="Oshima K."/>
            <person name="Hattori M."/>
            <person name="Aksoy S."/>
        </authorList>
    </citation>
    <scope>NUCLEOTIDE SEQUENCE [LARGE SCALE GENOMIC DNA]</scope>
    <source>
        <strain>morsitans</strain>
    </source>
</reference>
<gene>
    <name type="ordered locus">SG1947</name>
</gene>
<accession>Q2NRK3</accession>
<name>Y1947_SODGM</name>
<sequence>MYDNLKSLGVNHPDDIDRYSLRQEANNDILKIYFRRDKGELFAKSVKFKYPRQRKTVVSYNAAEGYREINGISPNLRYVIDELDQICLRDQTEVDLKNKILDDLRHLESVVSNKIAEIEADLEKLTRQK</sequence>
<protein>
    <recommendedName>
        <fullName evidence="1">UPF0325 protein SG1947</fullName>
    </recommendedName>
</protein>
<organism>
    <name type="scientific">Sodalis glossinidius (strain morsitans)</name>
    <dbReference type="NCBI Taxonomy" id="343509"/>
    <lineage>
        <taxon>Bacteria</taxon>
        <taxon>Pseudomonadati</taxon>
        <taxon>Pseudomonadota</taxon>
        <taxon>Gammaproteobacteria</taxon>
        <taxon>Enterobacterales</taxon>
        <taxon>Bruguierivoracaceae</taxon>
        <taxon>Sodalis</taxon>
    </lineage>
</organism>